<keyword id="KW-1185">Reference proteome</keyword>
<keyword id="KW-0687">Ribonucleoprotein</keyword>
<keyword id="KW-0689">Ribosomal protein</keyword>
<keyword id="KW-0694">RNA-binding</keyword>
<keyword id="KW-0699">rRNA-binding</keyword>
<evidence type="ECO:0000255" key="1">
    <source>
        <dbReference type="HAMAP-Rule" id="MF_00500"/>
    </source>
</evidence>
<evidence type="ECO:0000305" key="2"/>
<protein>
    <recommendedName>
        <fullName evidence="1">Small ribosomal subunit protein bS20</fullName>
    </recommendedName>
    <alternativeName>
        <fullName evidence="2">30S ribosomal protein S20</fullName>
    </alternativeName>
</protein>
<name>RS20_KINRD</name>
<dbReference type="EMBL" id="CP000750">
    <property type="protein sequence ID" value="ABS04885.1"/>
    <property type="molecule type" value="Genomic_DNA"/>
</dbReference>
<dbReference type="RefSeq" id="WP_012086855.1">
    <property type="nucleotide sequence ID" value="NC_009664.2"/>
</dbReference>
<dbReference type="SMR" id="A6WDJ6"/>
<dbReference type="STRING" id="266940.Krad_3421"/>
<dbReference type="KEGG" id="kra:Krad_3421"/>
<dbReference type="eggNOG" id="COG0268">
    <property type="taxonomic scope" value="Bacteria"/>
</dbReference>
<dbReference type="HOGENOM" id="CLU_160655_0_1_11"/>
<dbReference type="OrthoDB" id="9807974at2"/>
<dbReference type="Proteomes" id="UP000001116">
    <property type="component" value="Chromosome"/>
</dbReference>
<dbReference type="GO" id="GO:0005829">
    <property type="term" value="C:cytosol"/>
    <property type="evidence" value="ECO:0007669"/>
    <property type="project" value="TreeGrafter"/>
</dbReference>
<dbReference type="GO" id="GO:0015935">
    <property type="term" value="C:small ribosomal subunit"/>
    <property type="evidence" value="ECO:0007669"/>
    <property type="project" value="TreeGrafter"/>
</dbReference>
<dbReference type="GO" id="GO:0070181">
    <property type="term" value="F:small ribosomal subunit rRNA binding"/>
    <property type="evidence" value="ECO:0007669"/>
    <property type="project" value="TreeGrafter"/>
</dbReference>
<dbReference type="GO" id="GO:0003735">
    <property type="term" value="F:structural constituent of ribosome"/>
    <property type="evidence" value="ECO:0007669"/>
    <property type="project" value="InterPro"/>
</dbReference>
<dbReference type="GO" id="GO:0006412">
    <property type="term" value="P:translation"/>
    <property type="evidence" value="ECO:0007669"/>
    <property type="project" value="UniProtKB-UniRule"/>
</dbReference>
<dbReference type="FunFam" id="1.20.58.110:FF:000001">
    <property type="entry name" value="30S ribosomal protein S20"/>
    <property type="match status" value="1"/>
</dbReference>
<dbReference type="Gene3D" id="1.20.58.110">
    <property type="entry name" value="Ribosomal protein S20"/>
    <property type="match status" value="1"/>
</dbReference>
<dbReference type="HAMAP" id="MF_00500">
    <property type="entry name" value="Ribosomal_bS20"/>
    <property type="match status" value="1"/>
</dbReference>
<dbReference type="InterPro" id="IPR002583">
    <property type="entry name" value="Ribosomal_bS20"/>
</dbReference>
<dbReference type="InterPro" id="IPR036510">
    <property type="entry name" value="Ribosomal_bS20_sf"/>
</dbReference>
<dbReference type="NCBIfam" id="TIGR00029">
    <property type="entry name" value="S20"/>
    <property type="match status" value="1"/>
</dbReference>
<dbReference type="PANTHER" id="PTHR33398">
    <property type="entry name" value="30S RIBOSOMAL PROTEIN S20"/>
    <property type="match status" value="1"/>
</dbReference>
<dbReference type="PANTHER" id="PTHR33398:SF1">
    <property type="entry name" value="SMALL RIBOSOMAL SUBUNIT PROTEIN BS20C"/>
    <property type="match status" value="1"/>
</dbReference>
<dbReference type="Pfam" id="PF01649">
    <property type="entry name" value="Ribosomal_S20p"/>
    <property type="match status" value="1"/>
</dbReference>
<dbReference type="SUPFAM" id="SSF46992">
    <property type="entry name" value="Ribosomal protein S20"/>
    <property type="match status" value="1"/>
</dbReference>
<accession>A6WDJ6</accession>
<gene>
    <name evidence="1" type="primary">rpsT</name>
    <name type="ordered locus">Krad_3421</name>
</gene>
<sequence>MANIKSQKKRILTNEKARLRNKAVKSELRTVVRGFREALAAGDAEKAQAALALASKKLDKAVSKGVIHKNQAANRKSAIAKAAAKV</sequence>
<organism>
    <name type="scientific">Kineococcus radiotolerans (strain ATCC BAA-149 / DSM 14245 / SRS30216)</name>
    <dbReference type="NCBI Taxonomy" id="266940"/>
    <lineage>
        <taxon>Bacteria</taxon>
        <taxon>Bacillati</taxon>
        <taxon>Actinomycetota</taxon>
        <taxon>Actinomycetes</taxon>
        <taxon>Kineosporiales</taxon>
        <taxon>Kineosporiaceae</taxon>
        <taxon>Kineococcus</taxon>
    </lineage>
</organism>
<feature type="chain" id="PRO_1000081434" description="Small ribosomal subunit protein bS20">
    <location>
        <begin position="1"/>
        <end position="86"/>
    </location>
</feature>
<reference key="1">
    <citation type="journal article" date="2008" name="PLoS ONE">
        <title>Survival in nuclear waste, extreme resistance, and potential applications gleaned from the genome sequence of Kineococcus radiotolerans SRS30216.</title>
        <authorList>
            <person name="Bagwell C.E."/>
            <person name="Bhat S."/>
            <person name="Hawkins G.M."/>
            <person name="Smith B.W."/>
            <person name="Biswas T."/>
            <person name="Hoover T.R."/>
            <person name="Saunders E."/>
            <person name="Han C.S."/>
            <person name="Tsodikov O.V."/>
            <person name="Shimkets L.J."/>
        </authorList>
    </citation>
    <scope>NUCLEOTIDE SEQUENCE [LARGE SCALE GENOMIC DNA]</scope>
    <source>
        <strain>ATCC BAA-149 / DSM 14245 / SRS30216</strain>
    </source>
</reference>
<comment type="function">
    <text evidence="1">Binds directly to 16S ribosomal RNA.</text>
</comment>
<comment type="similarity">
    <text evidence="1">Belongs to the bacterial ribosomal protein bS20 family.</text>
</comment>
<proteinExistence type="inferred from homology"/>